<reference key="1">
    <citation type="journal article" date="1996" name="Nucleic Acids Res.">
        <title>Complete sequence analysis of the genome of the bacterium Mycoplasma pneumoniae.</title>
        <authorList>
            <person name="Himmelreich R."/>
            <person name="Hilbert H."/>
            <person name="Plagens H."/>
            <person name="Pirkl E."/>
            <person name="Li B.-C."/>
            <person name="Herrmann R."/>
        </authorList>
    </citation>
    <scope>NUCLEOTIDE SEQUENCE [LARGE SCALE GENOMIC DNA]</scope>
    <source>
        <strain>ATCC 29342 / M129 / Subtype 1</strain>
    </source>
</reference>
<comment type="similarity">
    <text evidence="1">Belongs to the MgpC family.</text>
</comment>
<comment type="caution">
    <text evidence="1">Could be the product of a pseudogene.</text>
</comment>
<keyword id="KW-1185">Reference proteome</keyword>
<feature type="chain" id="PRO_0000210719" description="Putative MgpC-like protein MPN_102">
    <location>
        <begin position="1"/>
        <end position="272"/>
    </location>
</feature>
<accession>P75567</accession>
<evidence type="ECO:0000305" key="1"/>
<gene>
    <name type="ordered locus">MPN_102</name>
    <name type="ORF">C09_orf272</name>
    <name type="ORF">MP052</name>
</gene>
<sequence>MASSTSLGNVGDTTALTPLLRGATTTTTVQLKQTDSNSQDQQKFQKYLNTAQALHQMGVIVPELSQGGWQSQTARHSSTRGLQSAGANRGASLAARTTTTVGVGRRDSTSTTLELPNVITQLYHTSTSQLAYLNGQIVVMGSNAVPSLWYWVVDERTTSGRATWWAKTHLNFGTEVQKNFVENQLGFKSEDNSNTSLTNFKSQGLTQPAYLISGLDVVADHLVFAAFKAGAVGYDMTTDSNASTYNQALTWSTTAGLDSDGGTTTWWRILRG</sequence>
<name>Y102_MYCPN</name>
<dbReference type="EMBL" id="U00089">
    <property type="protein sequence ID" value="AAB95700.1"/>
    <property type="molecule type" value="Genomic_DNA"/>
</dbReference>
<dbReference type="PIR" id="S73378">
    <property type="entry name" value="S73378"/>
</dbReference>
<dbReference type="SMR" id="P75567"/>
<dbReference type="STRING" id="272634.MPN_102"/>
<dbReference type="EnsemblBacteria" id="AAB95700">
    <property type="protein sequence ID" value="AAB95700"/>
    <property type="gene ID" value="MPN_102"/>
</dbReference>
<dbReference type="KEGG" id="mpn:MPN_102"/>
<dbReference type="HOGENOM" id="CLU_053831_0_0_14"/>
<dbReference type="Proteomes" id="UP000000808">
    <property type="component" value="Chromosome"/>
</dbReference>
<dbReference type="InterPro" id="IPR007885">
    <property type="entry name" value="MgpC"/>
</dbReference>
<dbReference type="Pfam" id="PF05220">
    <property type="entry name" value="MgpC"/>
    <property type="match status" value="1"/>
</dbReference>
<organism>
    <name type="scientific">Mycoplasma pneumoniae (strain ATCC 29342 / M129 / Subtype 1)</name>
    <name type="common">Mycoplasmoides pneumoniae</name>
    <dbReference type="NCBI Taxonomy" id="272634"/>
    <lineage>
        <taxon>Bacteria</taxon>
        <taxon>Bacillati</taxon>
        <taxon>Mycoplasmatota</taxon>
        <taxon>Mycoplasmoidales</taxon>
        <taxon>Mycoplasmoidaceae</taxon>
        <taxon>Mycoplasmoides</taxon>
    </lineage>
</organism>
<protein>
    <recommendedName>
        <fullName>Putative MgpC-like protein MPN_102</fullName>
    </recommendedName>
</protein>
<proteinExistence type="uncertain"/>